<evidence type="ECO:0000250" key="1">
    <source>
        <dbReference type="UniProtKB" id="Q8H8C7"/>
    </source>
</evidence>
<evidence type="ECO:0000255" key="2"/>
<evidence type="ECO:0000255" key="3">
    <source>
        <dbReference type="PROSITE-ProRule" id="PRU01118"/>
    </source>
</evidence>
<evidence type="ECO:0000256" key="4">
    <source>
        <dbReference type="SAM" id="MobiDB-lite"/>
    </source>
</evidence>
<evidence type="ECO:0000269" key="5">
    <source>
    </source>
</evidence>
<evidence type="ECO:0000305" key="6"/>
<name>LYM1_ARATH</name>
<reference key="1">
    <citation type="journal article" date="2000" name="Nature">
        <title>Sequence and analysis of chromosome 1 of the plant Arabidopsis thaliana.</title>
        <authorList>
            <person name="Theologis A."/>
            <person name="Ecker J.R."/>
            <person name="Palm C.J."/>
            <person name="Federspiel N.A."/>
            <person name="Kaul S."/>
            <person name="White O."/>
            <person name="Alonso J."/>
            <person name="Altafi H."/>
            <person name="Araujo R."/>
            <person name="Bowman C.L."/>
            <person name="Brooks S.Y."/>
            <person name="Buehler E."/>
            <person name="Chan A."/>
            <person name="Chao Q."/>
            <person name="Chen H."/>
            <person name="Cheuk R.F."/>
            <person name="Chin C.W."/>
            <person name="Chung M.K."/>
            <person name="Conn L."/>
            <person name="Conway A.B."/>
            <person name="Conway A.R."/>
            <person name="Creasy T.H."/>
            <person name="Dewar K."/>
            <person name="Dunn P."/>
            <person name="Etgu P."/>
            <person name="Feldblyum T.V."/>
            <person name="Feng J.-D."/>
            <person name="Fong B."/>
            <person name="Fujii C.Y."/>
            <person name="Gill J.E."/>
            <person name="Goldsmith A.D."/>
            <person name="Haas B."/>
            <person name="Hansen N.F."/>
            <person name="Hughes B."/>
            <person name="Huizar L."/>
            <person name="Hunter J.L."/>
            <person name="Jenkins J."/>
            <person name="Johnson-Hopson C."/>
            <person name="Khan S."/>
            <person name="Khaykin E."/>
            <person name="Kim C.J."/>
            <person name="Koo H.L."/>
            <person name="Kremenetskaia I."/>
            <person name="Kurtz D.B."/>
            <person name="Kwan A."/>
            <person name="Lam B."/>
            <person name="Langin-Hooper S."/>
            <person name="Lee A."/>
            <person name="Lee J.M."/>
            <person name="Lenz C.A."/>
            <person name="Li J.H."/>
            <person name="Li Y.-P."/>
            <person name="Lin X."/>
            <person name="Liu S.X."/>
            <person name="Liu Z.A."/>
            <person name="Luros J.S."/>
            <person name="Maiti R."/>
            <person name="Marziali A."/>
            <person name="Militscher J."/>
            <person name="Miranda M."/>
            <person name="Nguyen M."/>
            <person name="Nierman W.C."/>
            <person name="Osborne B.I."/>
            <person name="Pai G."/>
            <person name="Peterson J."/>
            <person name="Pham P.K."/>
            <person name="Rizzo M."/>
            <person name="Rooney T."/>
            <person name="Rowley D."/>
            <person name="Sakano H."/>
            <person name="Salzberg S.L."/>
            <person name="Schwartz J.R."/>
            <person name="Shinn P."/>
            <person name="Southwick A.M."/>
            <person name="Sun H."/>
            <person name="Tallon L.J."/>
            <person name="Tambunga G."/>
            <person name="Toriumi M.J."/>
            <person name="Town C.D."/>
            <person name="Utterback T."/>
            <person name="Van Aken S."/>
            <person name="Vaysberg M."/>
            <person name="Vysotskaia V.S."/>
            <person name="Walker M."/>
            <person name="Wu D."/>
            <person name="Yu G."/>
            <person name="Fraser C.M."/>
            <person name="Venter J.C."/>
            <person name="Davis R.W."/>
        </authorList>
    </citation>
    <scope>NUCLEOTIDE SEQUENCE [LARGE SCALE GENOMIC DNA]</scope>
    <source>
        <strain>cv. Columbia</strain>
    </source>
</reference>
<reference key="2">
    <citation type="journal article" date="2017" name="Plant J.">
        <title>Araport11: a complete reannotation of the Arabidopsis thaliana reference genome.</title>
        <authorList>
            <person name="Cheng C.Y."/>
            <person name="Krishnakumar V."/>
            <person name="Chan A.P."/>
            <person name="Thibaud-Nissen F."/>
            <person name="Schobel S."/>
            <person name="Town C.D."/>
        </authorList>
    </citation>
    <scope>GENOME REANNOTATION</scope>
    <source>
        <strain>cv. Columbia</strain>
    </source>
</reference>
<reference key="3">
    <citation type="journal article" date="2003" name="Science">
        <title>Empirical analysis of transcriptional activity in the Arabidopsis genome.</title>
        <authorList>
            <person name="Yamada K."/>
            <person name="Lim J."/>
            <person name="Dale J.M."/>
            <person name="Chen H."/>
            <person name="Shinn P."/>
            <person name="Palm C.J."/>
            <person name="Southwick A.M."/>
            <person name="Wu H.C."/>
            <person name="Kim C.J."/>
            <person name="Nguyen M."/>
            <person name="Pham P.K."/>
            <person name="Cheuk R.F."/>
            <person name="Karlin-Newmann G."/>
            <person name="Liu S.X."/>
            <person name="Lam B."/>
            <person name="Sakano H."/>
            <person name="Wu T."/>
            <person name="Yu G."/>
            <person name="Miranda M."/>
            <person name="Quach H.L."/>
            <person name="Tripp M."/>
            <person name="Chang C.H."/>
            <person name="Lee J.M."/>
            <person name="Toriumi M.J."/>
            <person name="Chan M.M."/>
            <person name="Tang C.C."/>
            <person name="Onodera C.S."/>
            <person name="Deng J.M."/>
            <person name="Akiyama K."/>
            <person name="Ansari Y."/>
            <person name="Arakawa T."/>
            <person name="Banh J."/>
            <person name="Banno F."/>
            <person name="Bowser L."/>
            <person name="Brooks S.Y."/>
            <person name="Carninci P."/>
            <person name="Chao Q."/>
            <person name="Choy N."/>
            <person name="Enju A."/>
            <person name="Goldsmith A.D."/>
            <person name="Gurjal M."/>
            <person name="Hansen N.F."/>
            <person name="Hayashizaki Y."/>
            <person name="Johnson-Hopson C."/>
            <person name="Hsuan V.W."/>
            <person name="Iida K."/>
            <person name="Karnes M."/>
            <person name="Khan S."/>
            <person name="Koesema E."/>
            <person name="Ishida J."/>
            <person name="Jiang P.X."/>
            <person name="Jones T."/>
            <person name="Kawai J."/>
            <person name="Kamiya A."/>
            <person name="Meyers C."/>
            <person name="Nakajima M."/>
            <person name="Narusaka M."/>
            <person name="Seki M."/>
            <person name="Sakurai T."/>
            <person name="Satou M."/>
            <person name="Tamse R."/>
            <person name="Vaysberg M."/>
            <person name="Wallender E.K."/>
            <person name="Wong C."/>
            <person name="Yamamura Y."/>
            <person name="Yuan S."/>
            <person name="Shinozaki K."/>
            <person name="Davis R.W."/>
            <person name="Theologis A."/>
            <person name="Ecker J.R."/>
        </authorList>
    </citation>
    <scope>NUCLEOTIDE SEQUENCE [LARGE SCALE MRNA] (ISOFORM 1)</scope>
    <source>
        <strain>cv. Columbia</strain>
    </source>
</reference>
<reference key="4">
    <citation type="submission" date="2004-10" db="EMBL/GenBank/DDBJ databases">
        <title>Arabidopsis ORF clones.</title>
        <authorList>
            <person name="Shinn P."/>
            <person name="Chen H."/>
            <person name="Cheuk R.F."/>
            <person name="Kim C.J."/>
            <person name="Ecker J.R."/>
        </authorList>
    </citation>
    <scope>NUCLEOTIDE SEQUENCE [LARGE SCALE MRNA] (ISOFORM 1)</scope>
    <source>
        <strain>cv. Columbia</strain>
    </source>
</reference>
<reference key="5">
    <citation type="journal article" date="2011" name="Proc. Natl. Acad. Sci. U.S.A.">
        <title>Arabidopsis lysin-motif proteins LYM1 LYM3 CERK1 mediate bacterial peptidoglycan sensing and immunity to bacterial infection.</title>
        <authorList>
            <person name="Willmann R."/>
            <person name="Lajunen H.M."/>
            <person name="Erbs G."/>
            <person name="Newman M.-A."/>
            <person name="Kolb D."/>
            <person name="Tsuda K."/>
            <person name="Katagiri F."/>
            <person name="Fliegmann J."/>
            <person name="Bono J.-J."/>
            <person name="Cullimore J.V."/>
            <person name="Jehle A.K."/>
            <person name="Goetz F."/>
            <person name="Kulik A."/>
            <person name="Molinaro A."/>
            <person name="Lipka V."/>
            <person name="Gust A.A."/>
            <person name="Nuernberger T."/>
        </authorList>
    </citation>
    <scope>FUNCTION</scope>
    <scope>DISRUPTION PHENOTYPE</scope>
    <scope>INTERACTION WITH PEPTIDOGLYCAN</scope>
    <source>
        <strain>cv. Columbia</strain>
    </source>
</reference>
<keyword id="KW-0025">Alternative splicing</keyword>
<keyword id="KW-1003">Cell membrane</keyword>
<keyword id="KW-1015">Disulfide bond</keyword>
<keyword id="KW-0325">Glycoprotein</keyword>
<keyword id="KW-0336">GPI-anchor</keyword>
<keyword id="KW-0449">Lipoprotein</keyword>
<keyword id="KW-0472">Membrane</keyword>
<keyword id="KW-0611">Plant defense</keyword>
<keyword id="KW-1185">Reference proteome</keyword>
<keyword id="KW-0677">Repeat</keyword>
<keyword id="KW-0964">Secreted</keyword>
<keyword id="KW-0732">Signal</keyword>
<protein>
    <recommendedName>
        <fullName>LysM domain-containing GPI-anchored protein 1</fullName>
    </recommendedName>
</protein>
<dbReference type="EMBL" id="AC013482">
    <property type="protein sequence ID" value="AAF16531.1"/>
    <property type="molecule type" value="Genomic_DNA"/>
</dbReference>
<dbReference type="EMBL" id="CP002684">
    <property type="protein sequence ID" value="AEE30167.1"/>
    <property type="molecule type" value="Genomic_DNA"/>
</dbReference>
<dbReference type="EMBL" id="CP002684">
    <property type="protein sequence ID" value="AEE30168.1"/>
    <property type="molecule type" value="Genomic_DNA"/>
</dbReference>
<dbReference type="EMBL" id="AY057542">
    <property type="protein sequence ID" value="AAL09782.1"/>
    <property type="molecule type" value="mRNA"/>
</dbReference>
<dbReference type="EMBL" id="BT015782">
    <property type="protein sequence ID" value="AAU90072.1"/>
    <property type="molecule type" value="mRNA"/>
</dbReference>
<dbReference type="PIR" id="B86352">
    <property type="entry name" value="B86352"/>
</dbReference>
<dbReference type="RefSeq" id="NP_564153.1">
    <molecule id="Q93ZH0-1"/>
    <property type="nucleotide sequence ID" value="NM_102036.4"/>
</dbReference>
<dbReference type="RefSeq" id="NP_849697.1">
    <molecule id="Q93ZH0-2"/>
    <property type="nucleotide sequence ID" value="NM_179366.1"/>
</dbReference>
<dbReference type="SMR" id="Q93ZH0"/>
<dbReference type="FunCoup" id="Q93ZH0">
    <property type="interactions" value="918"/>
</dbReference>
<dbReference type="STRING" id="3702.Q93ZH0"/>
<dbReference type="GlyCosmos" id="Q93ZH0">
    <property type="glycosylation" value="6 sites, No reported glycans"/>
</dbReference>
<dbReference type="GlyGen" id="Q93ZH0">
    <property type="glycosylation" value="6 sites"/>
</dbReference>
<dbReference type="iPTMnet" id="Q93ZH0"/>
<dbReference type="PaxDb" id="3702-AT1G21880.2"/>
<dbReference type="ProteomicsDB" id="238747">
    <molecule id="Q93ZH0-1"/>
</dbReference>
<dbReference type="EnsemblPlants" id="AT1G21880.1">
    <molecule id="Q93ZH0-2"/>
    <property type="protein sequence ID" value="AT1G21880.1"/>
    <property type="gene ID" value="AT1G21880"/>
</dbReference>
<dbReference type="EnsemblPlants" id="AT1G21880.2">
    <molecule id="Q93ZH0-1"/>
    <property type="protein sequence ID" value="AT1G21880.2"/>
    <property type="gene ID" value="AT1G21880"/>
</dbReference>
<dbReference type="GeneID" id="838790"/>
<dbReference type="Gramene" id="AT1G21880.1">
    <molecule id="Q93ZH0-2"/>
    <property type="protein sequence ID" value="AT1G21880.1"/>
    <property type="gene ID" value="AT1G21880"/>
</dbReference>
<dbReference type="Gramene" id="AT1G21880.2">
    <molecule id="Q93ZH0-1"/>
    <property type="protein sequence ID" value="AT1G21880.2"/>
    <property type="gene ID" value="AT1G21880"/>
</dbReference>
<dbReference type="KEGG" id="ath:AT1G21880"/>
<dbReference type="Araport" id="AT1G21880"/>
<dbReference type="TAIR" id="AT1G21880">
    <property type="gene designation" value="LYP2"/>
</dbReference>
<dbReference type="eggNOG" id="ENOG502QWAT">
    <property type="taxonomic scope" value="Eukaryota"/>
</dbReference>
<dbReference type="InParanoid" id="Q93ZH0"/>
<dbReference type="OMA" id="VKFMMAI"/>
<dbReference type="OrthoDB" id="2107166at2759"/>
<dbReference type="PhylomeDB" id="Q93ZH0"/>
<dbReference type="PRO" id="PR:Q93ZH0"/>
<dbReference type="Proteomes" id="UP000006548">
    <property type="component" value="Chromosome 1"/>
</dbReference>
<dbReference type="ExpressionAtlas" id="Q93ZH0">
    <property type="expression patterns" value="baseline and differential"/>
</dbReference>
<dbReference type="GO" id="GO:0005576">
    <property type="term" value="C:extracellular region"/>
    <property type="evidence" value="ECO:0007669"/>
    <property type="project" value="UniProtKB-SubCell"/>
</dbReference>
<dbReference type="GO" id="GO:0005634">
    <property type="term" value="C:nucleus"/>
    <property type="evidence" value="ECO:0007005"/>
    <property type="project" value="TAIR"/>
</dbReference>
<dbReference type="GO" id="GO:0005886">
    <property type="term" value="C:plasma membrane"/>
    <property type="evidence" value="ECO:0007005"/>
    <property type="project" value="TAIR"/>
</dbReference>
<dbReference type="GO" id="GO:0098552">
    <property type="term" value="C:side of membrane"/>
    <property type="evidence" value="ECO:0007669"/>
    <property type="project" value="UniProtKB-KW"/>
</dbReference>
<dbReference type="GO" id="GO:0042834">
    <property type="term" value="F:peptidoglycan binding"/>
    <property type="evidence" value="ECO:0000314"/>
    <property type="project" value="TAIR"/>
</dbReference>
<dbReference type="GO" id="GO:0006952">
    <property type="term" value="P:defense response"/>
    <property type="evidence" value="ECO:0007669"/>
    <property type="project" value="UniProtKB-KW"/>
</dbReference>
<dbReference type="GO" id="GO:0006955">
    <property type="term" value="P:immune response"/>
    <property type="evidence" value="ECO:0000315"/>
    <property type="project" value="TAIR"/>
</dbReference>
<dbReference type="CDD" id="cd00118">
    <property type="entry name" value="LysM"/>
    <property type="match status" value="1"/>
</dbReference>
<dbReference type="FunFam" id="3.10.350.10:FF:000030">
    <property type="entry name" value="Peptidoglycan-binding LysM domain-containing protein"/>
    <property type="match status" value="1"/>
</dbReference>
<dbReference type="Gene3D" id="3.10.350.10">
    <property type="entry name" value="LysM domain"/>
    <property type="match status" value="2"/>
</dbReference>
<dbReference type="InterPro" id="IPR018392">
    <property type="entry name" value="LysM_dom"/>
</dbReference>
<dbReference type="InterPro" id="IPR036779">
    <property type="entry name" value="LysM_dom_sf"/>
</dbReference>
<dbReference type="PANTHER" id="PTHR33734:SF35">
    <property type="entry name" value="LYSM DOMAIN-CONTAINING GPI-ANCHORED PROTEIN 1"/>
    <property type="match status" value="1"/>
</dbReference>
<dbReference type="PANTHER" id="PTHR33734">
    <property type="entry name" value="LYSM DOMAIN-CONTAINING GPI-ANCHORED PROTEIN 2"/>
    <property type="match status" value="1"/>
</dbReference>
<dbReference type="Pfam" id="PF01476">
    <property type="entry name" value="LysM"/>
    <property type="match status" value="2"/>
</dbReference>
<dbReference type="SMART" id="SM00257">
    <property type="entry name" value="LysM"/>
    <property type="match status" value="2"/>
</dbReference>
<dbReference type="SUPFAM" id="SSF54106">
    <property type="entry name" value="LysM domain"/>
    <property type="match status" value="1"/>
</dbReference>
<dbReference type="PROSITE" id="PS51782">
    <property type="entry name" value="LYSM"/>
    <property type="match status" value="2"/>
</dbReference>
<organism>
    <name type="scientific">Arabidopsis thaliana</name>
    <name type="common">Mouse-ear cress</name>
    <dbReference type="NCBI Taxonomy" id="3702"/>
    <lineage>
        <taxon>Eukaryota</taxon>
        <taxon>Viridiplantae</taxon>
        <taxon>Streptophyta</taxon>
        <taxon>Embryophyta</taxon>
        <taxon>Tracheophyta</taxon>
        <taxon>Spermatophyta</taxon>
        <taxon>Magnoliopsida</taxon>
        <taxon>eudicotyledons</taxon>
        <taxon>Gunneridae</taxon>
        <taxon>Pentapetalae</taxon>
        <taxon>rosids</taxon>
        <taxon>malvids</taxon>
        <taxon>Brassicales</taxon>
        <taxon>Brassicaceae</taxon>
        <taxon>Camelineae</taxon>
        <taxon>Arabidopsis</taxon>
    </lineage>
</organism>
<proteinExistence type="evidence at protein level"/>
<feature type="signal peptide" evidence="2">
    <location>
        <begin position="1"/>
        <end position="27"/>
    </location>
</feature>
<feature type="chain" id="PRO_0000021627" description="LysM domain-containing GPI-anchored protein 1">
    <location>
        <begin position="28"/>
        <end position="391"/>
    </location>
</feature>
<feature type="propeptide" id="PRO_0000021628" description="Removed in mature form" evidence="2">
    <location>
        <begin position="392"/>
        <end position="416"/>
    </location>
</feature>
<feature type="domain" description="LysM 1" evidence="3">
    <location>
        <begin position="110"/>
        <end position="157"/>
    </location>
</feature>
<feature type="domain" description="LysM 2" evidence="3">
    <location>
        <begin position="176"/>
        <end position="219"/>
    </location>
</feature>
<feature type="region of interest" description="Disordered" evidence="4">
    <location>
        <begin position="356"/>
        <end position="376"/>
    </location>
</feature>
<feature type="lipid moiety-binding region" description="GPI-anchor amidated alanine" evidence="2">
    <location>
        <position position="391"/>
    </location>
</feature>
<feature type="glycosylation site" description="N-linked (GlcNAc...) asparagine" evidence="2">
    <location>
        <position position="37"/>
    </location>
</feature>
<feature type="glycosylation site" description="N-linked (GlcNAc...) asparagine" evidence="2">
    <location>
        <position position="165"/>
    </location>
</feature>
<feature type="glycosylation site" description="N-linked (GlcNAc...) asparagine" evidence="2">
    <location>
        <position position="241"/>
    </location>
</feature>
<feature type="glycosylation site" description="N-linked (GlcNAc...) asparagine" evidence="2">
    <location>
        <position position="288"/>
    </location>
</feature>
<feature type="glycosylation site" description="N-linked (GlcNAc...) asparagine" evidence="2">
    <location>
        <position position="299"/>
    </location>
</feature>
<feature type="glycosylation site" description="N-linked (GlcNAc...) asparagine" evidence="2">
    <location>
        <position position="310"/>
    </location>
</feature>
<feature type="disulfide bond" evidence="1">
    <location>
        <begin position="34"/>
        <end position="100"/>
    </location>
</feature>
<feature type="disulfide bond" evidence="1">
    <location>
        <begin position="40"/>
        <end position="163"/>
    </location>
</feature>
<feature type="disulfide bond" evidence="1">
    <location>
        <begin position="98"/>
        <end position="161"/>
    </location>
</feature>
<feature type="disulfide bond" evidence="1">
    <location>
        <begin position="100"/>
        <end position="163"/>
    </location>
</feature>
<feature type="disulfide bond" evidence="1">
    <location>
        <begin position="224"/>
        <end position="256"/>
    </location>
</feature>
<feature type="disulfide bond" evidence="1">
    <location>
        <begin position="251"/>
        <end position="279"/>
    </location>
</feature>
<feature type="splice variant" id="VSP_008744" description="In isoform 2." evidence="6">
    <location>
        <begin position="317"/>
        <end position="416"/>
    </location>
</feature>
<sequence>MKIPEKPIFLIFVSLILASSLTFTATAKSTIEPCSSNDTCNALLGYTLYTDLKVSEVASLFQVDPISILLANAIDISYPDVENHILPSKLFLKIPITCSCVDGIRKSVSTHYKTRPSDNLGSIADSVYGGLVSAEQIQEANSVNDPSLLDVGTSLVIPLPCACFNGTDNSLPAVYLSYVVKEIDTLVGIARRYSTTITDLMNVNAMGAPDVSSGDILAVPLSACASKFPRYASDFGLIVPNGSYALAAGHCVQCSCALGSRNLYCEPASLAVSCSSMQCRNSNLMLGNITVQQTSAGCNVTTCDYNGIANGTILTMLTRSLQPRCPGPQQFAPLLAPPDTVPRDVMYAPAPSPDFDGPGSIASSPRSSMLPGGGILPGNPANGPAGSISTASASSVSYFFITFLISIASFSLALSS</sequence>
<accession>Q93ZH0</accession>
<accession>Q5XF34</accession>
<accession>Q9SFE8</accession>
<comment type="function">
    <text evidence="5">Required as a cell surface receptor for peptidoglycan (PGN) elicitor signaling leading to innate immunity. Plays an essential role in detecting PGNs and restricting bacterial growth (of Pseudomonas syringae pv. tomato DC3000 for example).</text>
</comment>
<comment type="subunit">
    <text evidence="5">Interacts with peptidoglycans.</text>
</comment>
<comment type="subcellular location">
    <molecule>Isoform 1</molecule>
    <subcellularLocation>
        <location>Cell membrane</location>
        <topology>Lipid-anchor</topology>
        <topology>GPI-anchor</topology>
    </subcellularLocation>
</comment>
<comment type="subcellular location">
    <molecule>Isoform 2</molecule>
    <subcellularLocation>
        <location evidence="6">Secreted</location>
    </subcellularLocation>
</comment>
<comment type="alternative products">
    <event type="alternative splicing"/>
    <isoform>
        <id>Q93ZH0-1</id>
        <name>1</name>
        <sequence type="displayed"/>
    </isoform>
    <isoform>
        <id>Q93ZH0-2</id>
        <name>2</name>
        <sequence type="described" ref="VSP_008744"/>
    </isoform>
</comment>
<comment type="disruption phenotype">
    <text evidence="5">Impaired sensitivity to peptidoglycans (PGNs) leading to higher susceptibility to infection with virulent Pseudomonas syringae pv. tomato DC3000.</text>
</comment>
<comment type="miscellaneous">
    <molecule>Isoform 1</molecule>
    <text>GPI-anchored form.</text>
</comment>
<comment type="miscellaneous">
    <molecule>Isoform 2</molecule>
    <text evidence="6">May be due to a competing donor splice site. Has no GPI-anchor.</text>
</comment>
<gene>
    <name type="primary">LYM1</name>
    <name type="ordered locus">At1g21880</name>
    <name type="ORF">T26F17.10</name>
    <name type="ORF">T26F17_5</name>
</gene>